<keyword id="KW-0963">Cytoplasm</keyword>
<keyword id="KW-0521">NADP</keyword>
<keyword id="KW-0560">Oxidoreductase</keyword>
<keyword id="KW-0671">Queuosine biosynthesis</keyword>
<evidence type="ECO:0000255" key="1">
    <source>
        <dbReference type="HAMAP-Rule" id="MF_00817"/>
    </source>
</evidence>
<comment type="function">
    <text evidence="1">Catalyzes the NADPH-dependent reduction of 7-cyano-7-deazaguanine (preQ0) to 7-aminomethyl-7-deazaguanine (preQ1).</text>
</comment>
<comment type="catalytic activity">
    <reaction evidence="1">
        <text>7-aminomethyl-7-carbaguanine + 2 NADP(+) = 7-cyano-7-deazaguanine + 2 NADPH + 3 H(+)</text>
        <dbReference type="Rhea" id="RHEA:13409"/>
        <dbReference type="ChEBI" id="CHEBI:15378"/>
        <dbReference type="ChEBI" id="CHEBI:45075"/>
        <dbReference type="ChEBI" id="CHEBI:57783"/>
        <dbReference type="ChEBI" id="CHEBI:58349"/>
        <dbReference type="ChEBI" id="CHEBI:58703"/>
        <dbReference type="EC" id="1.7.1.13"/>
    </reaction>
</comment>
<comment type="pathway">
    <text evidence="1">tRNA modification; tRNA-queuosine biosynthesis.</text>
</comment>
<comment type="subunit">
    <text evidence="1">Homodimer.</text>
</comment>
<comment type="subcellular location">
    <subcellularLocation>
        <location evidence="1">Cytoplasm</location>
    </subcellularLocation>
</comment>
<comment type="similarity">
    <text evidence="1">Belongs to the GTP cyclohydrolase I family. QueF type 2 subfamily.</text>
</comment>
<protein>
    <recommendedName>
        <fullName evidence="1">NADPH-dependent 7-cyano-7-deazaguanine reductase</fullName>
        <ecNumber evidence="1">1.7.1.13</ecNumber>
    </recommendedName>
    <alternativeName>
        <fullName evidence="1">7-cyano-7-carbaguanine reductase</fullName>
    </alternativeName>
    <alternativeName>
        <fullName evidence="1">NADPH-dependent nitrile oxidoreductase</fullName>
    </alternativeName>
    <alternativeName>
        <fullName evidence="1">PreQ(0) reductase</fullName>
    </alternativeName>
</protein>
<sequence length="282" mass="32615">MSSYENHQALDGLTLGKSTDYRDNYDASLLQGVPRSLNRDPLGLTADNLPFHGADIWTLYELSWLNSQGLPQVAVGHVELDYTSVNLIESKSFKLYLNSFNQTRFDTWETVRQTLERDLRACAQGNVSVRLHRLDELEGQPVAHFHGACIDDQDISIDNYQFTTDYLQHAVSGEKQVEETLVSHLLKSNCLITHQPDWGSIQIQYRGRKIDREKLLRYLVSFRHHNEFHEQCVERIFNDILRFCQPETLSVYARYTRRGGLDINPWRSNTDFVPATGRLARQ</sequence>
<dbReference type="EC" id="1.7.1.13" evidence="1"/>
<dbReference type="EMBL" id="CP001113">
    <property type="protein sequence ID" value="ACF62050.1"/>
    <property type="molecule type" value="Genomic_DNA"/>
</dbReference>
<dbReference type="RefSeq" id="WP_000100459.1">
    <property type="nucleotide sequence ID" value="NZ_CCMR01000001.1"/>
</dbReference>
<dbReference type="SMR" id="B4T4W1"/>
<dbReference type="KEGG" id="see:SNSL254_A3191"/>
<dbReference type="HOGENOM" id="CLU_054738_0_0_6"/>
<dbReference type="UniPathway" id="UPA00392"/>
<dbReference type="Proteomes" id="UP000008824">
    <property type="component" value="Chromosome"/>
</dbReference>
<dbReference type="GO" id="GO:0005737">
    <property type="term" value="C:cytoplasm"/>
    <property type="evidence" value="ECO:0007669"/>
    <property type="project" value="UniProtKB-SubCell"/>
</dbReference>
<dbReference type="GO" id="GO:0033739">
    <property type="term" value="F:preQ1 synthase activity"/>
    <property type="evidence" value="ECO:0007669"/>
    <property type="project" value="UniProtKB-UniRule"/>
</dbReference>
<dbReference type="GO" id="GO:0008616">
    <property type="term" value="P:queuosine biosynthetic process"/>
    <property type="evidence" value="ECO:0007669"/>
    <property type="project" value="UniProtKB-UniRule"/>
</dbReference>
<dbReference type="GO" id="GO:0006400">
    <property type="term" value="P:tRNA modification"/>
    <property type="evidence" value="ECO:0007669"/>
    <property type="project" value="UniProtKB-UniRule"/>
</dbReference>
<dbReference type="FunFam" id="3.30.1130.10:FF:000004">
    <property type="entry name" value="NADPH-dependent 7-cyano-7-deazaguanine reductase"/>
    <property type="match status" value="1"/>
</dbReference>
<dbReference type="Gene3D" id="3.30.1130.10">
    <property type="match status" value="2"/>
</dbReference>
<dbReference type="HAMAP" id="MF_00817">
    <property type="entry name" value="QueF_type2"/>
    <property type="match status" value="1"/>
</dbReference>
<dbReference type="InterPro" id="IPR043133">
    <property type="entry name" value="GTP-CH-I_C/QueF"/>
</dbReference>
<dbReference type="InterPro" id="IPR050084">
    <property type="entry name" value="NADPH_dep_7-cyano-7-deazaG_red"/>
</dbReference>
<dbReference type="InterPro" id="IPR029500">
    <property type="entry name" value="QueF"/>
</dbReference>
<dbReference type="InterPro" id="IPR029139">
    <property type="entry name" value="QueF_N"/>
</dbReference>
<dbReference type="InterPro" id="IPR016428">
    <property type="entry name" value="QueF_type2"/>
</dbReference>
<dbReference type="NCBIfam" id="TIGR03138">
    <property type="entry name" value="QueF"/>
    <property type="match status" value="1"/>
</dbReference>
<dbReference type="PANTHER" id="PTHR34354">
    <property type="entry name" value="NADPH-DEPENDENT 7-CYANO-7-DEAZAGUANINE REDUCTASE"/>
    <property type="match status" value="1"/>
</dbReference>
<dbReference type="PANTHER" id="PTHR34354:SF1">
    <property type="entry name" value="NADPH-DEPENDENT 7-CYANO-7-DEAZAGUANINE REDUCTASE"/>
    <property type="match status" value="1"/>
</dbReference>
<dbReference type="Pfam" id="PF14489">
    <property type="entry name" value="QueF"/>
    <property type="match status" value="1"/>
</dbReference>
<dbReference type="Pfam" id="PF14819">
    <property type="entry name" value="QueF_N"/>
    <property type="match status" value="1"/>
</dbReference>
<dbReference type="PIRSF" id="PIRSF004750">
    <property type="entry name" value="Nitrile_oxidored_YqcD_prd"/>
    <property type="match status" value="1"/>
</dbReference>
<dbReference type="SUPFAM" id="SSF55620">
    <property type="entry name" value="Tetrahydrobiopterin biosynthesis enzymes-like"/>
    <property type="match status" value="1"/>
</dbReference>
<gene>
    <name evidence="1" type="primary">queF</name>
    <name type="ordered locus">SNSL254_A3191</name>
</gene>
<proteinExistence type="inferred from homology"/>
<reference key="1">
    <citation type="journal article" date="2011" name="J. Bacteriol.">
        <title>Comparative genomics of 28 Salmonella enterica isolates: evidence for CRISPR-mediated adaptive sublineage evolution.</title>
        <authorList>
            <person name="Fricke W.F."/>
            <person name="Mammel M.K."/>
            <person name="McDermott P.F."/>
            <person name="Tartera C."/>
            <person name="White D.G."/>
            <person name="Leclerc J.E."/>
            <person name="Ravel J."/>
            <person name="Cebula T.A."/>
        </authorList>
    </citation>
    <scope>NUCLEOTIDE SEQUENCE [LARGE SCALE GENOMIC DNA]</scope>
    <source>
        <strain>SL254</strain>
    </source>
</reference>
<organism>
    <name type="scientific">Salmonella newport (strain SL254)</name>
    <dbReference type="NCBI Taxonomy" id="423368"/>
    <lineage>
        <taxon>Bacteria</taxon>
        <taxon>Pseudomonadati</taxon>
        <taxon>Pseudomonadota</taxon>
        <taxon>Gammaproteobacteria</taxon>
        <taxon>Enterobacterales</taxon>
        <taxon>Enterobacteriaceae</taxon>
        <taxon>Salmonella</taxon>
    </lineage>
</organism>
<accession>B4T4W1</accession>
<feature type="chain" id="PRO_1000213080" description="NADPH-dependent 7-cyano-7-deazaguanine reductase">
    <location>
        <begin position="1"/>
        <end position="282"/>
    </location>
</feature>
<feature type="active site" description="Thioimide intermediate" evidence="1">
    <location>
        <position position="190"/>
    </location>
</feature>
<feature type="active site" description="Proton donor" evidence="1">
    <location>
        <position position="197"/>
    </location>
</feature>
<feature type="binding site" evidence="1">
    <location>
        <begin position="88"/>
        <end position="90"/>
    </location>
    <ligand>
        <name>substrate</name>
    </ligand>
</feature>
<feature type="binding site" evidence="1">
    <location>
        <begin position="90"/>
        <end position="91"/>
    </location>
    <ligand>
        <name>NADPH</name>
        <dbReference type="ChEBI" id="CHEBI:57783"/>
    </ligand>
</feature>
<feature type="binding site" evidence="1">
    <location>
        <begin position="229"/>
        <end position="230"/>
    </location>
    <ligand>
        <name>substrate</name>
    </ligand>
</feature>
<feature type="binding site" evidence="1">
    <location>
        <begin position="258"/>
        <end position="259"/>
    </location>
    <ligand>
        <name>NADPH</name>
        <dbReference type="ChEBI" id="CHEBI:57783"/>
    </ligand>
</feature>
<name>QUEF_SALNS</name>